<dbReference type="EMBL" id="AY457940">
    <property type="protein sequence ID" value="AAS19323.1"/>
    <property type="molecule type" value="Genomic_DNA"/>
</dbReference>
<dbReference type="FunCoup" id="Q6SJ84">
    <property type="interactions" value="3"/>
</dbReference>
<dbReference type="Ensembl" id="ENSGGOT00000007298.3">
    <property type="protein sequence ID" value="ENSGGOP00000007111.3"/>
    <property type="gene ID" value="ENSGGOG00000007269.3"/>
</dbReference>
<dbReference type="eggNOG" id="ENOG502SCZ0">
    <property type="taxonomic scope" value="Eukaryota"/>
</dbReference>
<dbReference type="GeneTree" id="ENSGT00940000164738"/>
<dbReference type="HOGENOM" id="CLU_140435_0_0_1"/>
<dbReference type="InParanoid" id="Q6SJ84"/>
<dbReference type="OMA" id="RVLVFCY"/>
<dbReference type="Proteomes" id="UP000001519">
    <property type="component" value="Chromosome X"/>
</dbReference>
<dbReference type="Bgee" id="ENSGGOG00000007269">
    <property type="expression patterns" value="Expressed in testis"/>
</dbReference>
<dbReference type="InterPro" id="IPR010007">
    <property type="entry name" value="SPAN-X_fam"/>
</dbReference>
<dbReference type="Pfam" id="PF07458">
    <property type="entry name" value="SPAN-X"/>
    <property type="match status" value="1"/>
</dbReference>
<accession>Q6SJ84</accession>
<evidence type="ECO:0000256" key="1">
    <source>
        <dbReference type="SAM" id="MobiDB-lite"/>
    </source>
</evidence>
<evidence type="ECO:0000305" key="2"/>
<comment type="similarity">
    <text evidence="2">Belongs to the SPAN-X family.</text>
</comment>
<proteinExistence type="inferred from homology"/>
<name>SPXN1_GORGO</name>
<feature type="chain" id="PRO_0000285691" description="Sperm protein associated with the nucleus on the X chromosome N1">
    <location>
        <begin position="1"/>
        <end position="72"/>
    </location>
</feature>
<feature type="region of interest" description="Disordered" evidence="1">
    <location>
        <begin position="1"/>
        <end position="40"/>
    </location>
</feature>
<feature type="compositionally biased region" description="Basic and acidic residues" evidence="1">
    <location>
        <begin position="10"/>
        <end position="35"/>
    </location>
</feature>
<keyword id="KW-1185">Reference proteome</keyword>
<reference key="1">
    <citation type="journal article" date="2004" name="Proc. Natl. Acad. Sci. U.S.A.">
        <title>The SPANX gene family of cancer/testis-specific antigens: rapid evolution and amplification in African great apes and hominids.</title>
        <authorList>
            <person name="Kouprina N."/>
            <person name="Mullokandov M."/>
            <person name="Rogozin I.B."/>
            <person name="Collins N.K."/>
            <person name="Solomon G."/>
            <person name="Otstot J."/>
            <person name="Risinger J.I."/>
            <person name="Koonin E.V."/>
            <person name="Barrett J.C."/>
            <person name="Larionov V."/>
        </authorList>
    </citation>
    <scope>NUCLEOTIDE SEQUENCE [GENOMIC DNA]</scope>
</reference>
<gene>
    <name type="primary">SPANXN1</name>
</gene>
<organism>
    <name type="scientific">Gorilla gorilla gorilla</name>
    <name type="common">Western lowland gorilla</name>
    <dbReference type="NCBI Taxonomy" id="9595"/>
    <lineage>
        <taxon>Eukaryota</taxon>
        <taxon>Metazoa</taxon>
        <taxon>Chordata</taxon>
        <taxon>Craniata</taxon>
        <taxon>Vertebrata</taxon>
        <taxon>Euteleostomi</taxon>
        <taxon>Mammalia</taxon>
        <taxon>Eutheria</taxon>
        <taxon>Euarchontoglires</taxon>
        <taxon>Primates</taxon>
        <taxon>Haplorrhini</taxon>
        <taxon>Catarrhini</taxon>
        <taxon>Hominidae</taxon>
        <taxon>Gorilla</taxon>
    </lineage>
</organism>
<protein>
    <recommendedName>
        <fullName>Sperm protein associated with the nucleus on the X chromosome N1</fullName>
    </recommendedName>
    <alternativeName>
        <fullName>Nuclear-associated protein SPAN-Xn1</fullName>
        <shortName>SPANX-N1</shortName>
    </alternativeName>
    <alternativeName>
        <fullName>SPANX family member N1</fullName>
    </alternativeName>
</protein>
<sequence length="72" mass="8304">MEKPTSSTNGEKRKSPCDSNNKNDEMQETPNRDLVLEPSLKKMKTSEYSTVLVLCYRKTKKIHSNQLENDQS</sequence>